<comment type="function">
    <text evidence="1">Member of the eIF2 complex that functions in the early steps of protein synthesis by forming a ternary complex with GTP and initiator tRNA. This complex binds to a 40S ribosomal subunit, followed by mRNA binding to form the 43S pre-initiation complex (43S PIC). Junction of the 60S ribosomal subunit to form the 80S initiation complex is preceded by hydrolysis of the GTP bound to eIF2 and release of an eIF2-GDP binary complex. In order for eIF2 to recycle and catalyze another round of initiation, the GDP bound to eIF2 must exchange with GTP by way of a reaction catalyzed by eIF-2B (By similarity).</text>
</comment>
<comment type="catalytic activity">
    <reaction evidence="2">
        <text>GTP + H2O = GDP + phosphate + H(+)</text>
        <dbReference type="Rhea" id="RHEA:19669"/>
        <dbReference type="ChEBI" id="CHEBI:15377"/>
        <dbReference type="ChEBI" id="CHEBI:15378"/>
        <dbReference type="ChEBI" id="CHEBI:37565"/>
        <dbReference type="ChEBI" id="CHEBI:43474"/>
        <dbReference type="ChEBI" id="CHEBI:58189"/>
        <dbReference type="EC" id="3.6.5.3"/>
    </reaction>
</comment>
<comment type="subunit">
    <text evidence="3">Eukaryotic translation initiation factor 2 eIF2 is a heterotrimeric complex composed of an alpha (EIF2S1), a beta (EIF2S2) and a gamma (EIF2S3) chain. eIF2 is member of the 43S pre-initiation complex (43S PIC).</text>
</comment>
<comment type="subcellular location">
    <subcellularLocation>
        <location evidence="4">Cytoplasm</location>
        <location evidence="4">Cytosol</location>
    </subcellularLocation>
</comment>
<comment type="disruption phenotype">
    <text evidence="6">Morpholino knockdown of eif2s3 produces morphants characterized by hypomotility and morphological deficits at 2 dpf. They are shorter with a curved tail. They also display a significant reduction of head size and small eyes.</text>
</comment>
<comment type="similarity">
    <text evidence="5">Belongs to the TRAFAC class translation factor GTPase superfamily. Classic translation factor GTPase family. EIF2G subfamily.</text>
</comment>
<reference key="1">
    <citation type="journal article" date="2013" name="Nature">
        <title>The zebrafish reference genome sequence and its relationship to the human genome.</title>
        <authorList>
            <person name="Howe K."/>
            <person name="Clark M.D."/>
            <person name="Torroja C.F."/>
            <person name="Torrance J."/>
            <person name="Berthelot C."/>
            <person name="Muffato M."/>
            <person name="Collins J.E."/>
            <person name="Humphray S."/>
            <person name="McLaren K."/>
            <person name="Matthews L."/>
            <person name="McLaren S."/>
            <person name="Sealy I."/>
            <person name="Caccamo M."/>
            <person name="Churcher C."/>
            <person name="Scott C."/>
            <person name="Barrett J.C."/>
            <person name="Koch R."/>
            <person name="Rauch G.J."/>
            <person name="White S."/>
            <person name="Chow W."/>
            <person name="Kilian B."/>
            <person name="Quintais L.T."/>
            <person name="Guerra-Assuncao J.A."/>
            <person name="Zhou Y."/>
            <person name="Gu Y."/>
            <person name="Yen J."/>
            <person name="Vogel J.H."/>
            <person name="Eyre T."/>
            <person name="Redmond S."/>
            <person name="Banerjee R."/>
            <person name="Chi J."/>
            <person name="Fu B."/>
            <person name="Langley E."/>
            <person name="Maguire S.F."/>
            <person name="Laird G.K."/>
            <person name="Lloyd D."/>
            <person name="Kenyon E."/>
            <person name="Donaldson S."/>
            <person name="Sehra H."/>
            <person name="Almeida-King J."/>
            <person name="Loveland J."/>
            <person name="Trevanion S."/>
            <person name="Jones M."/>
            <person name="Quail M."/>
            <person name="Willey D."/>
            <person name="Hunt A."/>
            <person name="Burton J."/>
            <person name="Sims S."/>
            <person name="McLay K."/>
            <person name="Plumb B."/>
            <person name="Davis J."/>
            <person name="Clee C."/>
            <person name="Oliver K."/>
            <person name="Clark R."/>
            <person name="Riddle C."/>
            <person name="Elliot D."/>
            <person name="Threadgold G."/>
            <person name="Harden G."/>
            <person name="Ware D."/>
            <person name="Begum S."/>
            <person name="Mortimore B."/>
            <person name="Kerry G."/>
            <person name="Heath P."/>
            <person name="Phillimore B."/>
            <person name="Tracey A."/>
            <person name="Corby N."/>
            <person name="Dunn M."/>
            <person name="Johnson C."/>
            <person name="Wood J."/>
            <person name="Clark S."/>
            <person name="Pelan S."/>
            <person name="Griffiths G."/>
            <person name="Smith M."/>
            <person name="Glithero R."/>
            <person name="Howden P."/>
            <person name="Barker N."/>
            <person name="Lloyd C."/>
            <person name="Stevens C."/>
            <person name="Harley J."/>
            <person name="Holt K."/>
            <person name="Panagiotidis G."/>
            <person name="Lovell J."/>
            <person name="Beasley H."/>
            <person name="Henderson C."/>
            <person name="Gordon D."/>
            <person name="Auger K."/>
            <person name="Wright D."/>
            <person name="Collins J."/>
            <person name="Raisen C."/>
            <person name="Dyer L."/>
            <person name="Leung K."/>
            <person name="Robertson L."/>
            <person name="Ambridge K."/>
            <person name="Leongamornlert D."/>
            <person name="McGuire S."/>
            <person name="Gilderthorp R."/>
            <person name="Griffiths C."/>
            <person name="Manthravadi D."/>
            <person name="Nichol S."/>
            <person name="Barker G."/>
            <person name="Whitehead S."/>
            <person name="Kay M."/>
            <person name="Brown J."/>
            <person name="Murnane C."/>
            <person name="Gray E."/>
            <person name="Humphries M."/>
            <person name="Sycamore N."/>
            <person name="Barker D."/>
            <person name="Saunders D."/>
            <person name="Wallis J."/>
            <person name="Babbage A."/>
            <person name="Hammond S."/>
            <person name="Mashreghi-Mohammadi M."/>
            <person name="Barr L."/>
            <person name="Martin S."/>
            <person name="Wray P."/>
            <person name="Ellington A."/>
            <person name="Matthews N."/>
            <person name="Ellwood M."/>
            <person name="Woodmansey R."/>
            <person name="Clark G."/>
            <person name="Cooper J."/>
            <person name="Tromans A."/>
            <person name="Grafham D."/>
            <person name="Skuce C."/>
            <person name="Pandian R."/>
            <person name="Andrews R."/>
            <person name="Harrison E."/>
            <person name="Kimberley A."/>
            <person name="Garnett J."/>
            <person name="Fosker N."/>
            <person name="Hall R."/>
            <person name="Garner P."/>
            <person name="Kelly D."/>
            <person name="Bird C."/>
            <person name="Palmer S."/>
            <person name="Gehring I."/>
            <person name="Berger A."/>
            <person name="Dooley C.M."/>
            <person name="Ersan-Urun Z."/>
            <person name="Eser C."/>
            <person name="Geiger H."/>
            <person name="Geisler M."/>
            <person name="Karotki L."/>
            <person name="Kirn A."/>
            <person name="Konantz J."/>
            <person name="Konantz M."/>
            <person name="Oberlander M."/>
            <person name="Rudolph-Geiger S."/>
            <person name="Teucke M."/>
            <person name="Lanz C."/>
            <person name="Raddatz G."/>
            <person name="Osoegawa K."/>
            <person name="Zhu B."/>
            <person name="Rapp A."/>
            <person name="Widaa S."/>
            <person name="Langford C."/>
            <person name="Yang F."/>
            <person name="Schuster S.C."/>
            <person name="Carter N.P."/>
            <person name="Harrow J."/>
            <person name="Ning Z."/>
            <person name="Herrero J."/>
            <person name="Searle S.M."/>
            <person name="Enright A."/>
            <person name="Geisler R."/>
            <person name="Plasterk R.H."/>
            <person name="Lee C."/>
            <person name="Westerfield M."/>
            <person name="de Jong P.J."/>
            <person name="Zon L.I."/>
            <person name="Postlethwait J.H."/>
            <person name="Nusslein-Volhard C."/>
            <person name="Hubbard T.J."/>
            <person name="Roest Crollius H."/>
            <person name="Rogers J."/>
            <person name="Stemple D.L."/>
        </authorList>
    </citation>
    <scope>NUCLEOTIDE SEQUENCE [LARGE SCALE GENOMIC DNA]</scope>
    <source>
        <strain>Tuebingen</strain>
    </source>
</reference>
<reference key="2">
    <citation type="journal article" date="2016" name="Am. J. Med. Genet. A">
        <title>Two novel EIF2S3 mutations associated with syndromic intellectual disability with severe microcephaly, growth retardation, and epilepsy.</title>
        <authorList>
            <person name="Moortgat S."/>
            <person name="Desir J."/>
            <person name="Benoit V."/>
            <person name="Boulanger S."/>
            <person name="Pendeville H."/>
            <person name="Nassogne M.C."/>
            <person name="Lederer D."/>
            <person name="Maystadt I."/>
        </authorList>
    </citation>
    <scope>DISRUPTION PHENOTYPE</scope>
</reference>
<organism>
    <name type="scientific">Danio rerio</name>
    <name type="common">Zebrafish</name>
    <name type="synonym">Brachydanio rerio</name>
    <dbReference type="NCBI Taxonomy" id="7955"/>
    <lineage>
        <taxon>Eukaryota</taxon>
        <taxon>Metazoa</taxon>
        <taxon>Chordata</taxon>
        <taxon>Craniata</taxon>
        <taxon>Vertebrata</taxon>
        <taxon>Euteleostomi</taxon>
        <taxon>Actinopterygii</taxon>
        <taxon>Neopterygii</taxon>
        <taxon>Teleostei</taxon>
        <taxon>Ostariophysi</taxon>
        <taxon>Cypriniformes</taxon>
        <taxon>Danionidae</taxon>
        <taxon>Danioninae</taxon>
        <taxon>Danio</taxon>
    </lineage>
</organism>
<proteinExistence type="inferred from homology"/>
<gene>
    <name evidence="7" type="primary">eif2s3</name>
</gene>
<evidence type="ECO:0000250" key="1">
    <source>
        <dbReference type="UniProtKB" id="P05198"/>
    </source>
</evidence>
<evidence type="ECO:0000250" key="2">
    <source>
        <dbReference type="UniProtKB" id="P32481"/>
    </source>
</evidence>
<evidence type="ECO:0000250" key="3">
    <source>
        <dbReference type="UniProtKB" id="P41091"/>
    </source>
</evidence>
<evidence type="ECO:0000250" key="4">
    <source>
        <dbReference type="UniProtKB" id="Q09130"/>
    </source>
</evidence>
<evidence type="ECO:0000255" key="5">
    <source>
        <dbReference type="PROSITE-ProRule" id="PRU01059"/>
    </source>
</evidence>
<evidence type="ECO:0000269" key="6">
    <source>
    </source>
</evidence>
<evidence type="ECO:0000312" key="7">
    <source>
        <dbReference type="ZFIN" id="ZDB-GENE-030131-5552"/>
    </source>
</evidence>
<protein>
    <recommendedName>
        <fullName>Eukaryotic translation initiation factor 2 subunit 3</fullName>
        <ecNumber evidence="2">3.6.5.3</ecNumber>
    </recommendedName>
    <alternativeName>
        <fullName>Eukaryotic translation initiation factor 2 subunit gamma</fullName>
        <shortName>eIF2-gamma</shortName>
    </alternativeName>
</protein>
<dbReference type="EC" id="3.6.5.3" evidence="2"/>
<dbReference type="EMBL" id="BX469922">
    <property type="status" value="NOT_ANNOTATED_CDS"/>
    <property type="molecule type" value="Genomic_DNA"/>
</dbReference>
<dbReference type="RefSeq" id="NP_997876.2">
    <property type="nucleotide sequence ID" value="NM_212711.3"/>
</dbReference>
<dbReference type="SMR" id="F1QGW6"/>
<dbReference type="FunCoup" id="F1QGW6">
    <property type="interactions" value="1644"/>
</dbReference>
<dbReference type="STRING" id="7955.ENSDARP00000027695"/>
<dbReference type="PaxDb" id="7955-ENSDARP00000027695"/>
<dbReference type="Ensembl" id="ENSDART00000023833">
    <property type="protein sequence ID" value="ENSDARP00000027695"/>
    <property type="gene ID" value="ENSDARG00000008292"/>
</dbReference>
<dbReference type="GeneID" id="327341"/>
<dbReference type="KEGG" id="dre:327341"/>
<dbReference type="AGR" id="ZFIN:ZDB-GENE-030131-5552"/>
<dbReference type="CTD" id="1968"/>
<dbReference type="ZFIN" id="ZDB-GENE-030131-5552">
    <property type="gene designation" value="eif2s3"/>
</dbReference>
<dbReference type="eggNOG" id="KOG0466">
    <property type="taxonomic scope" value="Eukaryota"/>
</dbReference>
<dbReference type="HOGENOM" id="CLU_027154_0_1_1"/>
<dbReference type="InParanoid" id="F1QGW6"/>
<dbReference type="OMA" id="NIGMVGH"/>
<dbReference type="OrthoDB" id="1045173at2759"/>
<dbReference type="PhylomeDB" id="F1QGW6"/>
<dbReference type="TreeFam" id="TF101513"/>
<dbReference type="Reactome" id="R-DRE-156827">
    <property type="pathway name" value="L13a-mediated translational silencing of Ceruloplasmin expression"/>
</dbReference>
<dbReference type="Reactome" id="R-DRE-382556">
    <property type="pathway name" value="ABC-family proteins mediated transport"/>
</dbReference>
<dbReference type="Reactome" id="R-DRE-72695">
    <property type="pathway name" value="Formation of the ternary complex, and subsequently, the 43S complex"/>
</dbReference>
<dbReference type="Reactome" id="R-DRE-72702">
    <property type="pathway name" value="Ribosomal scanning and start codon recognition"/>
</dbReference>
<dbReference type="Reactome" id="R-DRE-72731">
    <property type="pathway name" value="Recycling of eIF2:GDP"/>
</dbReference>
<dbReference type="Reactome" id="R-DRE-9840373">
    <property type="pathway name" value="Cellular response to mitochondrial stress"/>
</dbReference>
<dbReference type="PRO" id="PR:F1QGW6"/>
<dbReference type="Proteomes" id="UP000000437">
    <property type="component" value="Chromosome 24"/>
</dbReference>
<dbReference type="Bgee" id="ENSDARG00000008292">
    <property type="expression patterns" value="Expressed in granulocyte and 25 other cell types or tissues"/>
</dbReference>
<dbReference type="ExpressionAtlas" id="F1QGW6">
    <property type="expression patterns" value="baseline"/>
</dbReference>
<dbReference type="GO" id="GO:0005829">
    <property type="term" value="C:cytosol"/>
    <property type="evidence" value="ECO:0007669"/>
    <property type="project" value="UniProtKB-SubCell"/>
</dbReference>
<dbReference type="GO" id="GO:0005850">
    <property type="term" value="C:eukaryotic translation initiation factor 2 complex"/>
    <property type="evidence" value="ECO:0000250"/>
    <property type="project" value="UniProtKB"/>
</dbReference>
<dbReference type="GO" id="GO:0005525">
    <property type="term" value="F:GTP binding"/>
    <property type="evidence" value="ECO:0007669"/>
    <property type="project" value="UniProtKB-KW"/>
</dbReference>
<dbReference type="GO" id="GO:0003924">
    <property type="term" value="F:GTPase activity"/>
    <property type="evidence" value="ECO:0007669"/>
    <property type="project" value="InterPro"/>
</dbReference>
<dbReference type="GO" id="GO:1990856">
    <property type="term" value="F:methionyl-initiator methionine tRNA binding"/>
    <property type="evidence" value="ECO:0000250"/>
    <property type="project" value="UniProtKB"/>
</dbReference>
<dbReference type="GO" id="GO:0003743">
    <property type="term" value="F:translation initiation factor activity"/>
    <property type="evidence" value="ECO:0000318"/>
    <property type="project" value="GO_Central"/>
</dbReference>
<dbReference type="GO" id="GO:0002183">
    <property type="term" value="P:cytoplasmic translational initiation"/>
    <property type="evidence" value="ECO:0000250"/>
    <property type="project" value="UniProtKB"/>
</dbReference>
<dbReference type="GO" id="GO:0001731">
    <property type="term" value="P:formation of translation preinitiation complex"/>
    <property type="evidence" value="ECO:0000318"/>
    <property type="project" value="GO_Central"/>
</dbReference>
<dbReference type="CDD" id="cd01888">
    <property type="entry name" value="eIF2_gamma"/>
    <property type="match status" value="1"/>
</dbReference>
<dbReference type="CDD" id="cd03688">
    <property type="entry name" value="eIF2_gamma_II"/>
    <property type="match status" value="1"/>
</dbReference>
<dbReference type="CDD" id="cd15490">
    <property type="entry name" value="eIF2_gamma_III"/>
    <property type="match status" value="1"/>
</dbReference>
<dbReference type="FunFam" id="2.40.30.10:FF:000009">
    <property type="entry name" value="Eukaryotic translation initiation factor 2 subunit gamma"/>
    <property type="match status" value="1"/>
</dbReference>
<dbReference type="FunFam" id="2.40.30.10:FF:000011">
    <property type="entry name" value="Eukaryotic translation initiation factor 2 subunit gamma"/>
    <property type="match status" value="1"/>
</dbReference>
<dbReference type="FunFam" id="3.40.50.300:FF:000065">
    <property type="entry name" value="Eukaryotic translation initiation factor 2 subunit gamma"/>
    <property type="match status" value="1"/>
</dbReference>
<dbReference type="Gene3D" id="3.40.50.300">
    <property type="entry name" value="P-loop containing nucleotide triphosphate hydrolases"/>
    <property type="match status" value="1"/>
</dbReference>
<dbReference type="Gene3D" id="2.40.30.10">
    <property type="entry name" value="Translation factors"/>
    <property type="match status" value="2"/>
</dbReference>
<dbReference type="InterPro" id="IPR004161">
    <property type="entry name" value="EFTu-like_2"/>
</dbReference>
<dbReference type="InterPro" id="IPR050543">
    <property type="entry name" value="eIF2G"/>
</dbReference>
<dbReference type="InterPro" id="IPR015256">
    <property type="entry name" value="eIF2g_C"/>
</dbReference>
<dbReference type="InterPro" id="IPR044127">
    <property type="entry name" value="eIF2g_dom_2"/>
</dbReference>
<dbReference type="InterPro" id="IPR044128">
    <property type="entry name" value="eIF2g_GTP-bd"/>
</dbReference>
<dbReference type="InterPro" id="IPR027417">
    <property type="entry name" value="P-loop_NTPase"/>
</dbReference>
<dbReference type="InterPro" id="IPR000795">
    <property type="entry name" value="T_Tr_GTP-bd_dom"/>
</dbReference>
<dbReference type="InterPro" id="IPR009000">
    <property type="entry name" value="Transl_B-barrel_sf"/>
</dbReference>
<dbReference type="InterPro" id="IPR009001">
    <property type="entry name" value="Transl_elong_EF1A/Init_IF2_C"/>
</dbReference>
<dbReference type="NCBIfam" id="NF003077">
    <property type="entry name" value="PRK04000.1"/>
    <property type="match status" value="1"/>
</dbReference>
<dbReference type="PANTHER" id="PTHR42854">
    <property type="entry name" value="EUKARYOTIC TRANSLATION INITIATION FACTOR 2 SUBUNIT 3 FAMILY MEMBER"/>
    <property type="match status" value="1"/>
</dbReference>
<dbReference type="PANTHER" id="PTHR42854:SF3">
    <property type="entry name" value="EUKARYOTIC TRANSLATION INITIATION FACTOR 2 SUBUNIT 3-RELATED"/>
    <property type="match status" value="1"/>
</dbReference>
<dbReference type="Pfam" id="PF09173">
    <property type="entry name" value="eIF2_C"/>
    <property type="match status" value="1"/>
</dbReference>
<dbReference type="Pfam" id="PF00009">
    <property type="entry name" value="GTP_EFTU"/>
    <property type="match status" value="1"/>
</dbReference>
<dbReference type="Pfam" id="PF03144">
    <property type="entry name" value="GTP_EFTU_D2"/>
    <property type="match status" value="1"/>
</dbReference>
<dbReference type="PRINTS" id="PR00315">
    <property type="entry name" value="ELONGATNFCT"/>
</dbReference>
<dbReference type="SUPFAM" id="SSF50465">
    <property type="entry name" value="EF-Tu/eEF-1alpha/eIF2-gamma C-terminal domain"/>
    <property type="match status" value="1"/>
</dbReference>
<dbReference type="SUPFAM" id="SSF52540">
    <property type="entry name" value="P-loop containing nucleoside triphosphate hydrolases"/>
    <property type="match status" value="1"/>
</dbReference>
<dbReference type="SUPFAM" id="SSF50447">
    <property type="entry name" value="Translation proteins"/>
    <property type="match status" value="1"/>
</dbReference>
<dbReference type="PROSITE" id="PS51722">
    <property type="entry name" value="G_TR_2"/>
    <property type="match status" value="1"/>
</dbReference>
<name>IF2G_DANRE</name>
<feature type="chain" id="PRO_0000438780" description="Eukaryotic translation initiation factor 2 subunit 3">
    <location>
        <begin position="1"/>
        <end position="472"/>
    </location>
</feature>
<feature type="domain" description="tr-type G" evidence="5">
    <location>
        <begin position="39"/>
        <end position="247"/>
    </location>
</feature>
<feature type="region of interest" description="G1" evidence="5">
    <location>
        <begin position="48"/>
        <end position="55"/>
    </location>
</feature>
<feature type="region of interest" description="G2" evidence="5">
    <location>
        <begin position="76"/>
        <end position="80"/>
    </location>
</feature>
<feature type="region of interest" description="G3" evidence="5">
    <location>
        <begin position="134"/>
        <end position="137"/>
    </location>
</feature>
<feature type="region of interest" description="G4" evidence="5">
    <location>
        <begin position="190"/>
        <end position="193"/>
    </location>
</feature>
<feature type="region of interest" description="G5" evidence="5">
    <location>
        <begin position="225"/>
        <end position="227"/>
    </location>
</feature>
<feature type="region of interest" description="Interacts with cdc123" evidence="3">
    <location>
        <begin position="457"/>
        <end position="469"/>
    </location>
</feature>
<feature type="binding site" evidence="2">
    <location>
        <begin position="51"/>
        <end position="56"/>
    </location>
    <ligand>
        <name>GTP</name>
        <dbReference type="ChEBI" id="CHEBI:37565"/>
    </ligand>
</feature>
<feature type="binding site" evidence="2">
    <location>
        <begin position="190"/>
        <end position="193"/>
    </location>
    <ligand>
        <name>GTP</name>
        <dbReference type="ChEBI" id="CHEBI:37565"/>
    </ligand>
</feature>
<feature type="binding site" evidence="2">
    <location>
        <begin position="225"/>
        <end position="227"/>
    </location>
    <ligand>
        <name>GTP</name>
        <dbReference type="ChEBI" id="CHEBI:37565"/>
    </ligand>
</feature>
<sequence>MAGDESGTTLGQPHLYKQDLSTLDVSKLTPLSQEIISRQATINIGTIGHVAHGKSTVVKAISGVHTVRFKNELERNITIKLGYANAKVYKLDDPSCPRPECYRSCGSSTPDEFPTDIPGTKGNFKLVRHVSFVDCPGHDILMATMLNGAAVMDAALLLIAGNESCPQPQTSEHLAAIEIMKLKHILILQNKIDLVKESQAKEQYEQILAFVQGTVAEGAPIIPISAQLKYNIEVVCEYIVNKIPVPVRDFTSEPRLIVIRSFDVNKPGCEVDDLKGGVAGGSILKGVLKVGQELEVRPGIVSKDHEGKLMCKPIFSKIVSLFAEHNDLQYAAPGGLIGVGTKIDPTLCRADRMVGQVLGAVGALPEIFTELEISYFLLRRLLGVRTEGDKKAAKVQKLSKNEVLMVNIGSLSTGGRVSAVKADLAKIVLTNPVCTEVGEKIALSRRVEKHWRLIGWGQIRRGVTITPTVDDD</sequence>
<accession>F1QGW6</accession>
<keyword id="KW-0963">Cytoplasm</keyword>
<keyword id="KW-0342">GTP-binding</keyword>
<keyword id="KW-0378">Hydrolase</keyword>
<keyword id="KW-0396">Initiation factor</keyword>
<keyword id="KW-0547">Nucleotide-binding</keyword>
<keyword id="KW-0648">Protein biosynthesis</keyword>
<keyword id="KW-1185">Reference proteome</keyword>